<comment type="function">
    <text>Transcriptional repressor that constitutively blocks expression of beta-lactamase. Regulates genes involved in antibiotic resistance. Binds DNA as a dimer.</text>
</comment>
<comment type="subunit">
    <text evidence="2">Homodimer.</text>
</comment>
<comment type="subcellular location">
    <subcellularLocation>
        <location evidence="3">Cytoplasm</location>
    </subcellularLocation>
</comment>
<comment type="PTM">
    <text evidence="1">Upon exposure to beta-lactams, proteolytic cleavage at a single site may impair dimerization and abolish repressor activity.</text>
</comment>
<comment type="similarity">
    <text evidence="3">Belongs to the BlaI transcriptional regulatory family.</text>
</comment>
<accession>P06555</accession>
<accession>P12286</accession>
<feature type="chain" id="PRO_0000062792" description="Penicillinase repressor">
    <location>
        <begin position="1"/>
        <end position="128"/>
    </location>
</feature>
<feature type="DNA-binding region" description="H-T-H motif">
    <location>
        <begin position="6"/>
        <end position="70"/>
    </location>
</feature>
<feature type="region of interest" description="Important for dimerization" evidence="1">
    <location>
        <begin position="73"/>
        <end position="128"/>
    </location>
</feature>
<feature type="site" description="Cleavage" evidence="1">
    <location>
        <begin position="100"/>
        <end position="101"/>
    </location>
</feature>
<feature type="sequence conflict" description="In Ref. 3; AAA22650." evidence="3" ref="3">
    <original>S</original>
    <variation>P</variation>
    <location>
        <position position="34"/>
    </location>
</feature>
<feature type="sequence conflict" description="In Ref. 3; AAA22650." evidence="3" ref="3">
    <original>MV</original>
    <variation>IL</variation>
    <location>
        <begin position="97"/>
        <end position="98"/>
    </location>
</feature>
<feature type="helix" evidence="4">
    <location>
        <begin position="9"/>
        <end position="19"/>
    </location>
</feature>
<feature type="strand" evidence="4">
    <location>
        <begin position="21"/>
        <end position="25"/>
    </location>
</feature>
<feature type="helix" evidence="4">
    <location>
        <begin position="26"/>
        <end position="36"/>
    </location>
</feature>
<feature type="helix" evidence="4">
    <location>
        <begin position="41"/>
        <end position="53"/>
    </location>
</feature>
<feature type="strand" evidence="4">
    <location>
        <begin position="56"/>
        <end position="62"/>
    </location>
</feature>
<feature type="strand" evidence="4">
    <location>
        <begin position="65"/>
        <end position="71"/>
    </location>
</feature>
<feature type="strand" evidence="4">
    <location>
        <begin position="73"/>
        <end position="75"/>
    </location>
</feature>
<sequence length="128" mass="15034">MKKIPQISDAELEVMKVIWKHSSINTNEVIKELSKTSTWSPKTIQTMLLRLIKKGALNHHKEGRVFVYTPNIDESDYIEVKSHSFLNRFYNGTLNSMVLNFLENDQLSGEEINELYQILEEHKNRKKE</sequence>
<keyword id="KW-0002">3D-structure</keyword>
<keyword id="KW-0046">Antibiotic resistance</keyword>
<keyword id="KW-0963">Cytoplasm</keyword>
<keyword id="KW-0903">Direct protein sequencing</keyword>
<keyword id="KW-0238">DNA-binding</keyword>
<keyword id="KW-0678">Repressor</keyword>
<keyword id="KW-0804">Transcription</keyword>
<keyword id="KW-0805">Transcription regulation</keyword>
<dbReference type="EMBL" id="M14734">
    <property type="protein sequence ID" value="AAA22648.1"/>
    <property type="molecule type" value="Genomic_DNA"/>
</dbReference>
<dbReference type="EMBL" id="M21337">
    <property type="protein sequence ID" value="AAA22650.1"/>
    <property type="molecule type" value="Genomic_DNA"/>
</dbReference>
<dbReference type="EMBL" id="X05798">
    <property type="protein sequence ID" value="CAA29242.1"/>
    <property type="molecule type" value="Genomic_DNA"/>
</dbReference>
<dbReference type="EMBL" id="M17368">
    <property type="protein sequence ID" value="AAA22272.1"/>
    <property type="molecule type" value="Genomic_DNA"/>
</dbReference>
<dbReference type="PIR" id="B28183">
    <property type="entry name" value="B28183"/>
</dbReference>
<dbReference type="PIR" id="S00093">
    <property type="entry name" value="RGBSBI"/>
</dbReference>
<dbReference type="PDB" id="1P6R">
    <property type="method" value="NMR"/>
    <property type="chains" value="A=1-82"/>
</dbReference>
<dbReference type="PDB" id="2P7C">
    <property type="method" value="NMR"/>
    <property type="chains" value="B=1-82"/>
</dbReference>
<dbReference type="PDBsum" id="1P6R"/>
<dbReference type="PDBsum" id="2P7C"/>
<dbReference type="BMRB" id="P06555"/>
<dbReference type="SMR" id="P06555"/>
<dbReference type="PATRIC" id="fig|1402.64.peg.4007"/>
<dbReference type="EvolutionaryTrace" id="P06555"/>
<dbReference type="GO" id="GO:0005737">
    <property type="term" value="C:cytoplasm"/>
    <property type="evidence" value="ECO:0007669"/>
    <property type="project" value="UniProtKB-SubCell"/>
</dbReference>
<dbReference type="GO" id="GO:0003677">
    <property type="term" value="F:DNA binding"/>
    <property type="evidence" value="ECO:0007669"/>
    <property type="project" value="UniProtKB-KW"/>
</dbReference>
<dbReference type="GO" id="GO:0045892">
    <property type="term" value="P:negative regulation of DNA-templated transcription"/>
    <property type="evidence" value="ECO:0007669"/>
    <property type="project" value="InterPro"/>
</dbReference>
<dbReference type="GO" id="GO:0046677">
    <property type="term" value="P:response to antibiotic"/>
    <property type="evidence" value="ECO:0007669"/>
    <property type="project" value="UniProtKB-KW"/>
</dbReference>
<dbReference type="Gene3D" id="1.10.4040.10">
    <property type="entry name" value="Penicillinase repressor domain"/>
    <property type="match status" value="1"/>
</dbReference>
<dbReference type="Gene3D" id="1.10.10.10">
    <property type="entry name" value="Winged helix-like DNA-binding domain superfamily/Winged helix DNA-binding domain"/>
    <property type="match status" value="1"/>
</dbReference>
<dbReference type="InterPro" id="IPR005650">
    <property type="entry name" value="BlaI_family"/>
</dbReference>
<dbReference type="InterPro" id="IPR036388">
    <property type="entry name" value="WH-like_DNA-bd_sf"/>
</dbReference>
<dbReference type="InterPro" id="IPR036390">
    <property type="entry name" value="WH_DNA-bd_sf"/>
</dbReference>
<dbReference type="Pfam" id="PF03965">
    <property type="entry name" value="Penicillinase_R"/>
    <property type="match status" value="1"/>
</dbReference>
<dbReference type="PIRSF" id="PIRSF019455">
    <property type="entry name" value="CopR_AtkY"/>
    <property type="match status" value="1"/>
</dbReference>
<dbReference type="SUPFAM" id="SSF46785">
    <property type="entry name" value="Winged helix' DNA-binding domain"/>
    <property type="match status" value="1"/>
</dbReference>
<evidence type="ECO:0000250" key="1"/>
<evidence type="ECO:0000269" key="2">
    <source>
    </source>
</evidence>
<evidence type="ECO:0000305" key="3"/>
<evidence type="ECO:0007829" key="4">
    <source>
        <dbReference type="PDB" id="1P6R"/>
    </source>
</evidence>
<protein>
    <recommendedName>
        <fullName>Penicillinase repressor</fullName>
    </recommendedName>
    <alternativeName>
        <fullName>Beta-lactamase repressor protein</fullName>
    </alternativeName>
    <alternativeName>
        <fullName>Regulatory protein BlaI</fullName>
    </alternativeName>
</protein>
<reference key="1">
    <citation type="journal article" date="1986" name="J. Bacteriol.">
        <title>Nucleotide sequence of the penicillinase repressor gene penI of Bacillus licheniformis and regulation of penP and penI by the repressor.</title>
        <authorList>
            <person name="Himeno T."/>
            <person name="Imanaka T."/>
            <person name="Aiba S."/>
        </authorList>
    </citation>
    <scope>NUCLEOTIDE SEQUENCE [GENOMIC DNA]</scope>
</reference>
<reference key="2">
    <citation type="journal article" date="1987" name="FEBS Lett.">
        <title>Repressor gene, blaI, for Bacillus licheniformis 749 beta-lactamase.</title>
        <authorList>
            <person name="Nicholls N.J."/>
            <person name="Lampen J.O."/>
        </authorList>
    </citation>
    <scope>NUCLEOTIDE SEQUENCE [GENOMIC DNA]</scope>
    <source>
        <strain>ATCC 25972 / DSM 8782 / NCIMB 11109 / IMET 10723 / 749/C</strain>
    </source>
</reference>
<reference key="3">
    <citation type="journal article" date="1988" name="J. Bacteriol.">
        <title>Regulation of the penicillinase genes of Bacillus licheniformis: interaction of the pen repressor with its operators.</title>
        <authorList>
            <person name="Wittman V."/>
            <person name="Wong H.C."/>
        </authorList>
    </citation>
    <scope>NUCLEOTIDE SEQUENCE [GENOMIC DNA]</scope>
    <source>
        <strain>ATCC 25972 / DSM 8782 / NCIMB 11109 / IMET 10723 / 749/C</strain>
    </source>
</reference>
<reference key="4">
    <citation type="journal article" date="1987" name="J. Bacteriol.">
        <title>A second regulatory gene, blaR1, encoding a potential penicillin-binding protein required for induction of beta-lactamase in Bacillus licheniformis.</title>
        <authorList>
            <person name="Kobayashi T."/>
            <person name="Zhu Y.F."/>
            <person name="Nicholls N.J."/>
            <person name="Lampen J.O."/>
        </authorList>
    </citation>
    <scope>NUCLEOTIDE SEQUENCE [GENOMIC DNA] OF 106-128</scope>
    <source>
        <strain>ATCC 25972 / DSM 8782 / NCIMB 11109 / IMET 10723 / 749/C</strain>
    </source>
</reference>
<reference key="5">
    <citation type="journal article" date="1987" name="Nucleic Acids Res.">
        <title>Purification and DNA binding properties of the blaI gene product, repressor for the beta-lactamase gene, blaP, of Bacillus licheniformis.</title>
        <authorList>
            <person name="Grossman M.J."/>
            <person name="Lampen J.O."/>
        </authorList>
    </citation>
    <scope>NUCLEOTIDE SEQUENCE [GENOMIC DNA] OF 1-26</scope>
</reference>
<reference key="6">
    <citation type="journal article" date="2003" name="J. Mol. Biol.">
        <title>Solution structural study of BlaI: implications for the repression of genes involved in beta-lactam antibiotic resistance.</title>
        <authorList>
            <person name="Melckebeke H.V."/>
            <person name="Vreuls C."/>
            <person name="Gans P."/>
            <person name="Filee P."/>
            <person name="Llabres G."/>
            <person name="Joris B."/>
            <person name="Simorre J.-P."/>
        </authorList>
    </citation>
    <scope>STRUCTURE BY NMR OF 1-82</scope>
    <scope>PARTIAL PROTEIN SEQUENCE</scope>
    <scope>IDENTIFICATION BY MASS SPECTROMETRY</scope>
    <scope>INTERACTION WITH DNA</scope>
</reference>
<reference key="7">
    <citation type="journal article" date="2007" name="Nucleic Acids Res.">
        <title>Conformational and thermodynamic changes of the repressor/DNA operator complex upon monomerization shed new light on regulation mechanisms of bacterial resistance against beta-lactam antibiotics.</title>
        <authorList>
            <person name="Boudet J."/>
            <person name="Duval V."/>
            <person name="Van Melckebeke H."/>
            <person name="Blackledge M."/>
            <person name="Amoroso A."/>
            <person name="Joris B."/>
            <person name="Simorre J.-P."/>
        </authorList>
    </citation>
    <scope>STRUCTURE BY NMR OF 1-82</scope>
    <scope>SUBUNIT</scope>
    <scope>INTERACTION WITH DNA</scope>
</reference>
<organism>
    <name type="scientific">Bacillus licheniformis</name>
    <dbReference type="NCBI Taxonomy" id="1402"/>
    <lineage>
        <taxon>Bacteria</taxon>
        <taxon>Bacillati</taxon>
        <taxon>Bacillota</taxon>
        <taxon>Bacilli</taxon>
        <taxon>Bacillales</taxon>
        <taxon>Bacillaceae</taxon>
        <taxon>Bacillus</taxon>
    </lineage>
</organism>
<name>BLAI_BACLI</name>
<gene>
    <name type="primary">blaI</name>
    <name type="synonym">penI</name>
</gene>
<proteinExistence type="evidence at protein level"/>